<keyword id="KW-0175">Coiled coil</keyword>
<keyword id="KW-1185">Reference proteome</keyword>
<feature type="chain" id="PRO_0000372092" description="Uncharacterized protein HH_0809">
    <location>
        <begin position="1"/>
        <end position="151"/>
    </location>
</feature>
<feature type="coiled-coil region" evidence="1">
    <location>
        <begin position="35"/>
        <end position="147"/>
    </location>
</feature>
<reference key="1">
    <citation type="journal article" date="2003" name="Proc. Natl. Acad. Sci. U.S.A.">
        <title>The complete genome sequence of the carcinogenic bacterium Helicobacter hepaticus.</title>
        <authorList>
            <person name="Suerbaum S."/>
            <person name="Josenhans C."/>
            <person name="Sterzenbach T."/>
            <person name="Drescher B."/>
            <person name="Brandt P."/>
            <person name="Bell M."/>
            <person name="Droege M."/>
            <person name="Fartmann B."/>
            <person name="Fischer H.-P."/>
            <person name="Ge Z."/>
            <person name="Hoerster A."/>
            <person name="Holland R."/>
            <person name="Klein K."/>
            <person name="Koenig J."/>
            <person name="Macko L."/>
            <person name="Mendz G.L."/>
            <person name="Nyakatura G."/>
            <person name="Schauer D.B."/>
            <person name="Shen Z."/>
            <person name="Weber J."/>
            <person name="Frosch M."/>
            <person name="Fox J.G."/>
        </authorList>
    </citation>
    <scope>NUCLEOTIDE SEQUENCE [LARGE SCALE GENOMIC DNA]</scope>
    <source>
        <strain>ATCC 51449 / 3B1</strain>
    </source>
</reference>
<reference key="2">
    <citation type="journal article" date="2007" name="Microbiology">
        <title>Nickel enzyme maturation in Helicobacter hepaticus: roles of accessory proteins in hydrogenase and urease activities.</title>
        <authorList>
            <person name="Benoit S.L."/>
            <person name="Zbell A.L."/>
            <person name="Maier R.J."/>
        </authorList>
    </citation>
    <scope>DISRUPTION PHENOTYPE</scope>
    <source>
        <strain>ATCC 51449 / 3B1</strain>
    </source>
</reference>
<sequence length="151" mass="17835">MPKIDKPLAQKVDERVFEQLLKYNPQTQNLWDIVGIFENERQKLRIEIAQYHEDIKNSQAKLKELREGITKAQNILRAIEQKISESPVPPEKEESQKEALMLKISELELENSKLLVELRDLKSEYQLEENLHQMQNMRETLQESLEDPSKP</sequence>
<gene>
    <name type="ordered locus">HH_0809</name>
</gene>
<organism>
    <name type="scientific">Helicobacter hepaticus (strain ATCC 51449 / 3B1)</name>
    <dbReference type="NCBI Taxonomy" id="235279"/>
    <lineage>
        <taxon>Bacteria</taxon>
        <taxon>Pseudomonadati</taxon>
        <taxon>Campylobacterota</taxon>
        <taxon>Epsilonproteobacteria</taxon>
        <taxon>Campylobacterales</taxon>
        <taxon>Helicobacteraceae</taxon>
        <taxon>Helicobacter</taxon>
    </lineage>
</organism>
<dbReference type="EMBL" id="AE017125">
    <property type="protein sequence ID" value="AAP77406.1"/>
    <property type="molecule type" value="Genomic_DNA"/>
</dbReference>
<dbReference type="RefSeq" id="WP_011115649.1">
    <property type="nucleotide sequence ID" value="NC_004917.1"/>
</dbReference>
<dbReference type="SMR" id="Q7VI02"/>
<dbReference type="STRING" id="235279.HH_0809"/>
<dbReference type="KEGG" id="hhe:HH_0809"/>
<dbReference type="HOGENOM" id="CLU_1832398_0_0_7"/>
<dbReference type="OrthoDB" id="5325637at2"/>
<dbReference type="Proteomes" id="UP000002495">
    <property type="component" value="Chromosome"/>
</dbReference>
<protein>
    <recommendedName>
        <fullName>Uncharacterized protein HH_0809</fullName>
    </recommendedName>
</protein>
<name>Y0809_HELHP</name>
<proteinExistence type="predicted"/>
<evidence type="ECO:0000255" key="1"/>
<evidence type="ECO:0000269" key="2">
    <source>
    </source>
</evidence>
<accession>Q7VI02</accession>
<comment type="disruption phenotype">
    <text evidence="2">Strains missing this gene make normal amounts of hydrogenase and urease; addition of Ni(2+) to cell cultures caused a reduction in the amount of the enzymes produced.</text>
</comment>